<gene>
    <name evidence="2" type="primary">acpP</name>
    <name type="ordered locus">SF1098</name>
    <name type="ordered locus">S1178</name>
</gene>
<keyword id="KW-0963">Cytoplasm</keyword>
<keyword id="KW-0275">Fatty acid biosynthesis</keyword>
<keyword id="KW-0276">Fatty acid metabolism</keyword>
<keyword id="KW-0444">Lipid biosynthesis</keyword>
<keyword id="KW-0443">Lipid metabolism</keyword>
<keyword id="KW-0596">Phosphopantetheine</keyword>
<keyword id="KW-0597">Phosphoprotein</keyword>
<keyword id="KW-1185">Reference proteome</keyword>
<comment type="function">
    <text evidence="2">Carrier of the growing fatty acid chain in fatty acid biosynthesis.</text>
</comment>
<comment type="pathway">
    <text evidence="2">Lipid metabolism; fatty acid biosynthesis.</text>
</comment>
<comment type="subcellular location">
    <subcellularLocation>
        <location evidence="2">Cytoplasm</location>
    </subcellularLocation>
</comment>
<comment type="PTM">
    <text evidence="2">4'-phosphopantetheine is transferred from CoA to a specific serine of apo-ACP by AcpS. This modification is essential for activity because fatty acids are bound in thioester linkage to the sulfhydryl of the prosthetic group.</text>
</comment>
<comment type="similarity">
    <text evidence="2">Belongs to the acyl carrier protein (ACP) family.</text>
</comment>
<dbReference type="EMBL" id="AE005674">
    <property type="protein sequence ID" value="AAN42717.1"/>
    <property type="molecule type" value="Genomic_DNA"/>
</dbReference>
<dbReference type="EMBL" id="AE014073">
    <property type="protein sequence ID" value="AAP16605.1"/>
    <property type="molecule type" value="Genomic_DNA"/>
</dbReference>
<dbReference type="RefSeq" id="NP_707010.1">
    <property type="nucleotide sequence ID" value="NC_004337.2"/>
</dbReference>
<dbReference type="RefSeq" id="WP_000103754.1">
    <property type="nucleotide sequence ID" value="NZ_WPGW01000001.1"/>
</dbReference>
<dbReference type="SMR" id="P0A6B3"/>
<dbReference type="STRING" id="198214.SF1098"/>
<dbReference type="PaxDb" id="198214-SF1098"/>
<dbReference type="GeneID" id="1024038"/>
<dbReference type="GeneID" id="98387866"/>
<dbReference type="KEGG" id="sfl:SF1098"/>
<dbReference type="KEGG" id="sfx:S1178"/>
<dbReference type="PATRIC" id="fig|198214.7.peg.1286"/>
<dbReference type="HOGENOM" id="CLU_108696_5_1_6"/>
<dbReference type="UniPathway" id="UPA00094"/>
<dbReference type="Proteomes" id="UP000001006">
    <property type="component" value="Chromosome"/>
</dbReference>
<dbReference type="Proteomes" id="UP000002673">
    <property type="component" value="Chromosome"/>
</dbReference>
<dbReference type="GO" id="GO:0005829">
    <property type="term" value="C:cytosol"/>
    <property type="evidence" value="ECO:0007669"/>
    <property type="project" value="TreeGrafter"/>
</dbReference>
<dbReference type="GO" id="GO:0016020">
    <property type="term" value="C:membrane"/>
    <property type="evidence" value="ECO:0007669"/>
    <property type="project" value="GOC"/>
</dbReference>
<dbReference type="GO" id="GO:0000035">
    <property type="term" value="F:acyl binding"/>
    <property type="evidence" value="ECO:0007669"/>
    <property type="project" value="TreeGrafter"/>
</dbReference>
<dbReference type="GO" id="GO:0000036">
    <property type="term" value="F:acyl carrier activity"/>
    <property type="evidence" value="ECO:0007669"/>
    <property type="project" value="UniProtKB-UniRule"/>
</dbReference>
<dbReference type="GO" id="GO:0009245">
    <property type="term" value="P:lipid A biosynthetic process"/>
    <property type="evidence" value="ECO:0007669"/>
    <property type="project" value="TreeGrafter"/>
</dbReference>
<dbReference type="FunFam" id="1.10.1200.10:FF:000001">
    <property type="entry name" value="Acyl carrier protein"/>
    <property type="match status" value="1"/>
</dbReference>
<dbReference type="Gene3D" id="1.10.1200.10">
    <property type="entry name" value="ACP-like"/>
    <property type="match status" value="1"/>
</dbReference>
<dbReference type="HAMAP" id="MF_01217">
    <property type="entry name" value="Acyl_carrier"/>
    <property type="match status" value="1"/>
</dbReference>
<dbReference type="InterPro" id="IPR003231">
    <property type="entry name" value="ACP"/>
</dbReference>
<dbReference type="InterPro" id="IPR036736">
    <property type="entry name" value="ACP-like_sf"/>
</dbReference>
<dbReference type="InterPro" id="IPR009081">
    <property type="entry name" value="PP-bd_ACP"/>
</dbReference>
<dbReference type="InterPro" id="IPR006162">
    <property type="entry name" value="Ppantetheine_attach_site"/>
</dbReference>
<dbReference type="NCBIfam" id="TIGR00517">
    <property type="entry name" value="acyl_carrier"/>
    <property type="match status" value="1"/>
</dbReference>
<dbReference type="NCBIfam" id="NF002148">
    <property type="entry name" value="PRK00982.1-2"/>
    <property type="match status" value="1"/>
</dbReference>
<dbReference type="NCBIfam" id="NF002149">
    <property type="entry name" value="PRK00982.1-3"/>
    <property type="match status" value="1"/>
</dbReference>
<dbReference type="NCBIfam" id="NF002150">
    <property type="entry name" value="PRK00982.1-4"/>
    <property type="match status" value="1"/>
</dbReference>
<dbReference type="NCBIfam" id="NF002151">
    <property type="entry name" value="PRK00982.1-5"/>
    <property type="match status" value="1"/>
</dbReference>
<dbReference type="PANTHER" id="PTHR20863">
    <property type="entry name" value="ACYL CARRIER PROTEIN"/>
    <property type="match status" value="1"/>
</dbReference>
<dbReference type="PANTHER" id="PTHR20863:SF76">
    <property type="entry name" value="CARRIER DOMAIN-CONTAINING PROTEIN"/>
    <property type="match status" value="1"/>
</dbReference>
<dbReference type="Pfam" id="PF00550">
    <property type="entry name" value="PP-binding"/>
    <property type="match status" value="1"/>
</dbReference>
<dbReference type="SUPFAM" id="SSF47336">
    <property type="entry name" value="ACP-like"/>
    <property type="match status" value="1"/>
</dbReference>
<dbReference type="PROSITE" id="PS50075">
    <property type="entry name" value="CARRIER"/>
    <property type="match status" value="1"/>
</dbReference>
<dbReference type="PROSITE" id="PS00012">
    <property type="entry name" value="PHOSPHOPANTETHEINE"/>
    <property type="match status" value="1"/>
</dbReference>
<sequence>MSTIEERVKKIIGEQLGVKQEEVTNNASFVEDLGADSLDTVELVMALEEEFDTEIPDEEAEKITTVQAAIDYINGHQA</sequence>
<name>ACP1_SHIFL</name>
<protein>
    <recommendedName>
        <fullName evidence="2">Acyl carrier protein</fullName>
        <shortName evidence="2">ACP</shortName>
    </recommendedName>
    <alternativeName>
        <fullName>Cytosolic-activating factor</fullName>
        <shortName>CAF</shortName>
    </alternativeName>
    <alternativeName>
        <fullName>Fatty acid synthase acyl carrier protein</fullName>
    </alternativeName>
</protein>
<reference key="1">
    <citation type="journal article" date="2002" name="Nucleic Acids Res.">
        <title>Genome sequence of Shigella flexneri 2a: insights into pathogenicity through comparison with genomes of Escherichia coli K12 and O157.</title>
        <authorList>
            <person name="Jin Q."/>
            <person name="Yuan Z."/>
            <person name="Xu J."/>
            <person name="Wang Y."/>
            <person name="Shen Y."/>
            <person name="Lu W."/>
            <person name="Wang J."/>
            <person name="Liu H."/>
            <person name="Yang J."/>
            <person name="Yang F."/>
            <person name="Zhang X."/>
            <person name="Zhang J."/>
            <person name="Yang G."/>
            <person name="Wu H."/>
            <person name="Qu D."/>
            <person name="Dong J."/>
            <person name="Sun L."/>
            <person name="Xue Y."/>
            <person name="Zhao A."/>
            <person name="Gao Y."/>
            <person name="Zhu J."/>
            <person name="Kan B."/>
            <person name="Ding K."/>
            <person name="Chen S."/>
            <person name="Cheng H."/>
            <person name="Yao Z."/>
            <person name="He B."/>
            <person name="Chen R."/>
            <person name="Ma D."/>
            <person name="Qiang B."/>
            <person name="Wen Y."/>
            <person name="Hou Y."/>
            <person name="Yu J."/>
        </authorList>
    </citation>
    <scope>NUCLEOTIDE SEQUENCE [LARGE SCALE GENOMIC DNA]</scope>
    <source>
        <strain>301 / Serotype 2a</strain>
    </source>
</reference>
<reference key="2">
    <citation type="journal article" date="2003" name="Infect. Immun.">
        <title>Complete genome sequence and comparative genomics of Shigella flexneri serotype 2a strain 2457T.</title>
        <authorList>
            <person name="Wei J."/>
            <person name="Goldberg M.B."/>
            <person name="Burland V."/>
            <person name="Venkatesan M.M."/>
            <person name="Deng W."/>
            <person name="Fournier G."/>
            <person name="Mayhew G.F."/>
            <person name="Plunkett G. III"/>
            <person name="Rose D.J."/>
            <person name="Darling A."/>
            <person name="Mau B."/>
            <person name="Perna N.T."/>
            <person name="Payne S.M."/>
            <person name="Runyen-Janecky L.J."/>
            <person name="Zhou S."/>
            <person name="Schwartz D.C."/>
            <person name="Blattner F.R."/>
        </authorList>
    </citation>
    <scope>NUCLEOTIDE SEQUENCE [LARGE SCALE GENOMIC DNA]</scope>
    <source>
        <strain>ATCC 700930 / 2457T / Serotype 2a</strain>
    </source>
</reference>
<organism>
    <name type="scientific">Shigella flexneri</name>
    <dbReference type="NCBI Taxonomy" id="623"/>
    <lineage>
        <taxon>Bacteria</taxon>
        <taxon>Pseudomonadati</taxon>
        <taxon>Pseudomonadota</taxon>
        <taxon>Gammaproteobacteria</taxon>
        <taxon>Enterobacterales</taxon>
        <taxon>Enterobacteriaceae</taxon>
        <taxon>Shigella</taxon>
    </lineage>
</organism>
<evidence type="ECO:0000250" key="1"/>
<evidence type="ECO:0000255" key="2">
    <source>
        <dbReference type="HAMAP-Rule" id="MF_01217"/>
    </source>
</evidence>
<evidence type="ECO:0000255" key="3">
    <source>
        <dbReference type="PROSITE-ProRule" id="PRU00258"/>
    </source>
</evidence>
<proteinExistence type="inferred from homology"/>
<accession>P0A6B3</accession>
<accession>P02901</accession>
<accession>Q53352</accession>
<feature type="initiator methionine" description="Removed" evidence="1">
    <location>
        <position position="1"/>
    </location>
</feature>
<feature type="chain" id="PRO_0000180186" description="Acyl carrier protein">
    <location>
        <begin position="2"/>
        <end position="78"/>
    </location>
</feature>
<feature type="domain" description="Carrier" evidence="3">
    <location>
        <begin position="2"/>
        <end position="77"/>
    </location>
</feature>
<feature type="modified residue" description="O-(pantetheine 4'-phosphoryl)serine" evidence="3">
    <location>
        <position position="37"/>
    </location>
</feature>